<name>BIOF_SYNC1</name>
<reference key="1">
    <citation type="submission" date="2005-10" db="EMBL/GenBank/DDBJ databases">
        <title>Complete sequence of Pelobacter carbinolicus DSM 2380.</title>
        <authorList>
            <person name="Copeland A."/>
            <person name="Lucas S."/>
            <person name="Lapidus A."/>
            <person name="Barry K."/>
            <person name="Detter J.C."/>
            <person name="Glavina T."/>
            <person name="Hammon N."/>
            <person name="Israni S."/>
            <person name="Pitluck S."/>
            <person name="Chertkov O."/>
            <person name="Schmutz J."/>
            <person name="Larimer F."/>
            <person name="Land M."/>
            <person name="Kyrpides N."/>
            <person name="Ivanova N."/>
            <person name="Richardson P."/>
        </authorList>
    </citation>
    <scope>NUCLEOTIDE SEQUENCE [LARGE SCALE GENOMIC DNA]</scope>
    <source>
        <strain>DSM 2380 / NBRC 103641 / GraBd1</strain>
    </source>
</reference>
<comment type="function">
    <text evidence="1">Catalyzes the decarboxylative condensation of pimeloyl-[acyl-carrier protein] and L-alanine to produce 8-amino-7-oxononanoate (AON), [acyl-carrier protein], and carbon dioxide.</text>
</comment>
<comment type="catalytic activity">
    <reaction>
        <text>6-carboxyhexanoyl-[ACP] + L-alanine + H(+) = (8S)-8-amino-7-oxononanoate + holo-[ACP] + CO2</text>
        <dbReference type="Rhea" id="RHEA:42288"/>
        <dbReference type="Rhea" id="RHEA-COMP:9685"/>
        <dbReference type="Rhea" id="RHEA-COMP:9955"/>
        <dbReference type="ChEBI" id="CHEBI:15378"/>
        <dbReference type="ChEBI" id="CHEBI:16526"/>
        <dbReference type="ChEBI" id="CHEBI:57972"/>
        <dbReference type="ChEBI" id="CHEBI:64479"/>
        <dbReference type="ChEBI" id="CHEBI:78846"/>
        <dbReference type="ChEBI" id="CHEBI:149468"/>
        <dbReference type="EC" id="2.3.1.47"/>
    </reaction>
</comment>
<comment type="cofactor">
    <cofactor evidence="1">
        <name>pyridoxal 5'-phosphate</name>
        <dbReference type="ChEBI" id="CHEBI:597326"/>
    </cofactor>
</comment>
<comment type="pathway">
    <text>Cofactor biosynthesis; biotin biosynthesis.</text>
</comment>
<comment type="subunit">
    <text evidence="1">Homodimer.</text>
</comment>
<comment type="similarity">
    <text evidence="2">Belongs to the class-II pyridoxal-phosphate-dependent aminotransferase family. BioF subfamily.</text>
</comment>
<dbReference type="EC" id="2.3.1.47"/>
<dbReference type="EMBL" id="CP000142">
    <property type="protein sequence ID" value="ABA88909.1"/>
    <property type="molecule type" value="Genomic_DNA"/>
</dbReference>
<dbReference type="RefSeq" id="WP_011341399.1">
    <property type="nucleotide sequence ID" value="NC_007498.2"/>
</dbReference>
<dbReference type="SMR" id="Q3A3Z8"/>
<dbReference type="STRING" id="338963.Pcar_1665"/>
<dbReference type="KEGG" id="pca:Pcar_1665"/>
<dbReference type="eggNOG" id="COG0156">
    <property type="taxonomic scope" value="Bacteria"/>
</dbReference>
<dbReference type="HOGENOM" id="CLU_015846_11_2_7"/>
<dbReference type="OrthoDB" id="9807157at2"/>
<dbReference type="UniPathway" id="UPA00078"/>
<dbReference type="Proteomes" id="UP000002534">
    <property type="component" value="Chromosome"/>
</dbReference>
<dbReference type="GO" id="GO:0008710">
    <property type="term" value="F:8-amino-7-oxononanoate synthase activity"/>
    <property type="evidence" value="ECO:0007669"/>
    <property type="project" value="UniProtKB-EC"/>
</dbReference>
<dbReference type="GO" id="GO:0030170">
    <property type="term" value="F:pyridoxal phosphate binding"/>
    <property type="evidence" value="ECO:0007669"/>
    <property type="project" value="InterPro"/>
</dbReference>
<dbReference type="GO" id="GO:0009102">
    <property type="term" value="P:biotin biosynthetic process"/>
    <property type="evidence" value="ECO:0007669"/>
    <property type="project" value="UniProtKB-UniPathway"/>
</dbReference>
<dbReference type="CDD" id="cd06454">
    <property type="entry name" value="KBL_like"/>
    <property type="match status" value="1"/>
</dbReference>
<dbReference type="Gene3D" id="3.90.1150.10">
    <property type="entry name" value="Aspartate Aminotransferase, domain 1"/>
    <property type="match status" value="1"/>
</dbReference>
<dbReference type="Gene3D" id="3.40.640.10">
    <property type="entry name" value="Type I PLP-dependent aspartate aminotransferase-like (Major domain)"/>
    <property type="match status" value="1"/>
</dbReference>
<dbReference type="InterPro" id="IPR001917">
    <property type="entry name" value="Aminotrans_II_pyridoxalP_BS"/>
</dbReference>
<dbReference type="InterPro" id="IPR004839">
    <property type="entry name" value="Aminotransferase_I/II_large"/>
</dbReference>
<dbReference type="InterPro" id="IPR050087">
    <property type="entry name" value="AON_synthase_class-II"/>
</dbReference>
<dbReference type="InterPro" id="IPR004723">
    <property type="entry name" value="AONS_Archaea/Proteobacteria"/>
</dbReference>
<dbReference type="InterPro" id="IPR015424">
    <property type="entry name" value="PyrdxlP-dep_Trfase"/>
</dbReference>
<dbReference type="InterPro" id="IPR015421">
    <property type="entry name" value="PyrdxlP-dep_Trfase_major"/>
</dbReference>
<dbReference type="InterPro" id="IPR015422">
    <property type="entry name" value="PyrdxlP-dep_Trfase_small"/>
</dbReference>
<dbReference type="NCBIfam" id="TIGR00858">
    <property type="entry name" value="bioF"/>
    <property type="match status" value="1"/>
</dbReference>
<dbReference type="PANTHER" id="PTHR13693:SF100">
    <property type="entry name" value="8-AMINO-7-OXONONANOATE SYNTHASE"/>
    <property type="match status" value="1"/>
</dbReference>
<dbReference type="PANTHER" id="PTHR13693">
    <property type="entry name" value="CLASS II AMINOTRANSFERASE/8-AMINO-7-OXONONANOATE SYNTHASE"/>
    <property type="match status" value="1"/>
</dbReference>
<dbReference type="Pfam" id="PF00155">
    <property type="entry name" value="Aminotran_1_2"/>
    <property type="match status" value="1"/>
</dbReference>
<dbReference type="SUPFAM" id="SSF53383">
    <property type="entry name" value="PLP-dependent transferases"/>
    <property type="match status" value="1"/>
</dbReference>
<dbReference type="PROSITE" id="PS00599">
    <property type="entry name" value="AA_TRANSFER_CLASS_2"/>
    <property type="match status" value="1"/>
</dbReference>
<gene>
    <name type="primary">bioF</name>
    <name type="ordered locus">Pcar_1665</name>
</gene>
<feature type="chain" id="PRO_0000381061" description="Putative 8-amino-7-oxononanoate synthase">
    <location>
        <begin position="1"/>
        <end position="390"/>
    </location>
</feature>
<feature type="binding site" evidence="1">
    <location>
        <position position="20"/>
    </location>
    <ligand>
        <name>substrate</name>
    </ligand>
</feature>
<feature type="binding site" evidence="1">
    <location>
        <begin position="107"/>
        <end position="108"/>
    </location>
    <ligand>
        <name>pyridoxal 5'-phosphate</name>
        <dbReference type="ChEBI" id="CHEBI:597326"/>
    </ligand>
</feature>
<feature type="binding site" evidence="1">
    <location>
        <position position="132"/>
    </location>
    <ligand>
        <name>substrate</name>
    </ligand>
</feature>
<feature type="binding site" evidence="1">
    <location>
        <position position="181"/>
    </location>
    <ligand>
        <name>pyridoxal 5'-phosphate</name>
        <dbReference type="ChEBI" id="CHEBI:597326"/>
    </ligand>
</feature>
<feature type="binding site" evidence="1">
    <location>
        <begin position="206"/>
        <end position="209"/>
    </location>
    <ligand>
        <name>pyridoxal 5'-phosphate</name>
        <dbReference type="ChEBI" id="CHEBI:597326"/>
    </ligand>
</feature>
<feature type="binding site" evidence="1">
    <location>
        <begin position="237"/>
        <end position="240"/>
    </location>
    <ligand>
        <name>pyridoxal 5'-phosphate</name>
        <dbReference type="ChEBI" id="CHEBI:597326"/>
    </ligand>
</feature>
<feature type="binding site" evidence="1">
    <location>
        <position position="356"/>
    </location>
    <ligand>
        <name>substrate</name>
    </ligand>
</feature>
<feature type="modified residue" description="N6-(pyridoxal phosphate)lysine" evidence="1">
    <location>
        <position position="240"/>
    </location>
</feature>
<evidence type="ECO:0000250" key="1"/>
<evidence type="ECO:0000305" key="2"/>
<organism>
    <name type="scientific">Syntrophotalea carbinolica (strain DSM 2380 / NBRC 103641 / GraBd1)</name>
    <name type="common">Pelobacter carbinolicus</name>
    <dbReference type="NCBI Taxonomy" id="338963"/>
    <lineage>
        <taxon>Bacteria</taxon>
        <taxon>Pseudomonadati</taxon>
        <taxon>Thermodesulfobacteriota</taxon>
        <taxon>Desulfuromonadia</taxon>
        <taxon>Desulfuromonadales</taxon>
        <taxon>Syntrophotaleaceae</taxon>
        <taxon>Syntrophotalea</taxon>
    </lineage>
</organism>
<accession>Q3A3Z8</accession>
<proteinExistence type="inferred from homology"/>
<sequence>MKLDHWQKTLDHLRDEEMLRGLKTVSGAQRDHVLLDGKDVLLLCSNNYLGLADHPALIEATCRATRDCGTGTGASRLVSGSMALHEELESKLAQFKGTQRALLFNAGYAANTGILQGLMGADDVIFSDSLNHASIIDGCRLSRAKTVVYPHRDTHALERLMAKEAPLRKGQWLIVTDGVFSMDGDLAPLPELVALKKRYDCLLMVDDAHGTGVLGDSGKGTGEYLGCLTDIDLHMGTLGKALGGFGAFVAGPDVVVQFLINRARSFIFSTSLPPGVVAAGIAALDIVNGSEGRQRRMNLQKLCTLFTGQLTESLPPEVRGETPIVPILTGDPEPTMRASAWLEAQGIFVQGIRPPTVPQGRCRLRATLMATHQVEDLLRAADLIRKVLSA</sequence>
<protein>
    <recommendedName>
        <fullName>Putative 8-amino-7-oxononanoate synthase</fullName>
        <shortName>AONS</shortName>
        <ecNumber>2.3.1.47</ecNumber>
    </recommendedName>
    <alternativeName>
        <fullName>7-keto-8-amino-pelargonic acid synthase</fullName>
        <shortName>7-KAP synthase</shortName>
    </alternativeName>
    <alternativeName>
        <fullName>8-amino-7-ketopelargonate synthase</fullName>
    </alternativeName>
</protein>
<keyword id="KW-0093">Biotin biosynthesis</keyword>
<keyword id="KW-0663">Pyridoxal phosphate</keyword>
<keyword id="KW-1185">Reference proteome</keyword>
<keyword id="KW-0808">Transferase</keyword>